<dbReference type="EC" id="3.5.3.6" evidence="1"/>
<dbReference type="EMBL" id="AP011115">
    <property type="protein sequence ID" value="BAH53963.1"/>
    <property type="molecule type" value="Genomic_DNA"/>
</dbReference>
<dbReference type="RefSeq" id="WP_015889457.1">
    <property type="nucleotide sequence ID" value="NC_012522.1"/>
</dbReference>
<dbReference type="SMR" id="C1AXW8"/>
<dbReference type="STRING" id="632772.ROP_57160"/>
<dbReference type="KEGG" id="rop:ROP_57160"/>
<dbReference type="PATRIC" id="fig|632772.20.peg.5970"/>
<dbReference type="HOGENOM" id="CLU_052662_0_1_11"/>
<dbReference type="OrthoDB" id="9807502at2"/>
<dbReference type="UniPathway" id="UPA00254">
    <property type="reaction ID" value="UER00364"/>
</dbReference>
<dbReference type="Proteomes" id="UP000002212">
    <property type="component" value="Chromosome"/>
</dbReference>
<dbReference type="GO" id="GO:0005737">
    <property type="term" value="C:cytoplasm"/>
    <property type="evidence" value="ECO:0007669"/>
    <property type="project" value="UniProtKB-SubCell"/>
</dbReference>
<dbReference type="GO" id="GO:0016990">
    <property type="term" value="F:arginine deiminase activity"/>
    <property type="evidence" value="ECO:0007669"/>
    <property type="project" value="UniProtKB-UniRule"/>
</dbReference>
<dbReference type="GO" id="GO:0019547">
    <property type="term" value="P:arginine catabolic process to ornithine"/>
    <property type="evidence" value="ECO:0007669"/>
    <property type="project" value="UniProtKB-UniRule"/>
</dbReference>
<dbReference type="GO" id="GO:0019546">
    <property type="term" value="P:arginine deiminase pathway"/>
    <property type="evidence" value="ECO:0007669"/>
    <property type="project" value="TreeGrafter"/>
</dbReference>
<dbReference type="Gene3D" id="1.10.3930.10">
    <property type="entry name" value="Arginine deiminase"/>
    <property type="match status" value="1"/>
</dbReference>
<dbReference type="Gene3D" id="3.75.10.10">
    <property type="entry name" value="L-arginine/glycine Amidinotransferase, Chain A"/>
    <property type="match status" value="1"/>
</dbReference>
<dbReference type="HAMAP" id="MF_00242">
    <property type="entry name" value="Arg_deiminase"/>
    <property type="match status" value="1"/>
</dbReference>
<dbReference type="InterPro" id="IPR003876">
    <property type="entry name" value="Arg_deiminase"/>
</dbReference>
<dbReference type="NCBIfam" id="TIGR01078">
    <property type="entry name" value="arcA"/>
    <property type="match status" value="1"/>
</dbReference>
<dbReference type="NCBIfam" id="NF002381">
    <property type="entry name" value="PRK01388.1"/>
    <property type="match status" value="1"/>
</dbReference>
<dbReference type="PANTHER" id="PTHR47271">
    <property type="entry name" value="ARGININE DEIMINASE"/>
    <property type="match status" value="1"/>
</dbReference>
<dbReference type="PANTHER" id="PTHR47271:SF2">
    <property type="entry name" value="ARGININE DEIMINASE"/>
    <property type="match status" value="1"/>
</dbReference>
<dbReference type="Pfam" id="PF02274">
    <property type="entry name" value="ADI"/>
    <property type="match status" value="1"/>
</dbReference>
<dbReference type="PIRSF" id="PIRSF006356">
    <property type="entry name" value="Arg_deiminase"/>
    <property type="match status" value="1"/>
</dbReference>
<dbReference type="PRINTS" id="PR01466">
    <property type="entry name" value="ARGDEIMINASE"/>
</dbReference>
<dbReference type="SUPFAM" id="SSF55909">
    <property type="entry name" value="Pentein"/>
    <property type="match status" value="1"/>
</dbReference>
<evidence type="ECO:0000255" key="1">
    <source>
        <dbReference type="HAMAP-Rule" id="MF_00242"/>
    </source>
</evidence>
<reference key="1">
    <citation type="submission" date="2009-03" db="EMBL/GenBank/DDBJ databases">
        <title>Comparison of the complete genome sequences of Rhodococcus erythropolis PR4 and Rhodococcus opacus B4.</title>
        <authorList>
            <person name="Takarada H."/>
            <person name="Sekine M."/>
            <person name="Hosoyama A."/>
            <person name="Yamada R."/>
            <person name="Fujisawa T."/>
            <person name="Omata S."/>
            <person name="Shimizu A."/>
            <person name="Tsukatani N."/>
            <person name="Tanikawa S."/>
            <person name="Fujita N."/>
            <person name="Harayama S."/>
        </authorList>
    </citation>
    <scope>NUCLEOTIDE SEQUENCE [LARGE SCALE GENOMIC DNA]</scope>
    <source>
        <strain>B4</strain>
    </source>
</reference>
<gene>
    <name evidence="1" type="primary">arcA</name>
    <name type="ordered locus">ROP_57160</name>
</gene>
<name>ARCA_RHOOB</name>
<comment type="catalytic activity">
    <reaction evidence="1">
        <text>L-arginine + H2O = L-citrulline + NH4(+)</text>
        <dbReference type="Rhea" id="RHEA:19597"/>
        <dbReference type="ChEBI" id="CHEBI:15377"/>
        <dbReference type="ChEBI" id="CHEBI:28938"/>
        <dbReference type="ChEBI" id="CHEBI:32682"/>
        <dbReference type="ChEBI" id="CHEBI:57743"/>
        <dbReference type="EC" id="3.5.3.6"/>
    </reaction>
</comment>
<comment type="pathway">
    <text evidence="1">Amino-acid degradation; L-arginine degradation via ADI pathway; carbamoyl phosphate from L-arginine: step 1/2.</text>
</comment>
<comment type="subcellular location">
    <subcellularLocation>
        <location evidence="1">Cytoplasm</location>
    </subcellularLocation>
</comment>
<comment type="similarity">
    <text evidence="1">Belongs to the arginine deiminase family.</text>
</comment>
<accession>C1AXW8</accession>
<proteinExistence type="inferred from homology"/>
<keyword id="KW-0056">Arginine metabolism</keyword>
<keyword id="KW-0963">Cytoplasm</keyword>
<keyword id="KW-0378">Hydrolase</keyword>
<sequence>MNASGSAPLGANSEVGQLRAVLLHRPGDELKRLTPRNNDQLLFDGLPWVDRAQEEHDAFADLLRSRGVEVLLLSDLLAETLGASGAARIQGIGAAVDPRKLGHTLAQELAAHLRGVPAPELSTILTAGMTFDELPVAANTASLVRRMHHGGDFVIDPLPNLLFTRDSSFWIGPRVAITSLALPARVRETSLTDIIYAHHPRFRGARRAYESHTAPVEGGDVLLLAPGVVAVGVGERTTPAGAEALARSVFEDELAHTVLVVPIAQARASMHLDTVCTMVDHDAVVMYPIIQDTLSAFTIHREDNGVSIRGADPFLSAAAEAMGIGKLRVIDTGLDNVTAEREQWDDGNNTLALAPGVVVAYERNVETNARLEASGIEVLRIAGSELGSGRGGPRCMSCPVARDPL</sequence>
<feature type="chain" id="PRO_1000125320" description="Arginine deiminase">
    <location>
        <begin position="1"/>
        <end position="405"/>
    </location>
</feature>
<feature type="active site" description="Amidino-cysteine intermediate" evidence="1">
    <location>
        <position position="395"/>
    </location>
</feature>
<protein>
    <recommendedName>
        <fullName evidence="1">Arginine deiminase</fullName>
        <shortName evidence="1">ADI</shortName>
        <ecNumber evidence="1">3.5.3.6</ecNumber>
    </recommendedName>
    <alternativeName>
        <fullName evidence="1">Arginine dihydrolase</fullName>
        <shortName evidence="1">AD</shortName>
    </alternativeName>
</protein>
<organism>
    <name type="scientific">Rhodococcus opacus (strain B4)</name>
    <dbReference type="NCBI Taxonomy" id="632772"/>
    <lineage>
        <taxon>Bacteria</taxon>
        <taxon>Bacillati</taxon>
        <taxon>Actinomycetota</taxon>
        <taxon>Actinomycetes</taxon>
        <taxon>Mycobacteriales</taxon>
        <taxon>Nocardiaceae</taxon>
        <taxon>Rhodococcus</taxon>
    </lineage>
</organism>